<name>RL28_PSEPG</name>
<reference key="1">
    <citation type="submission" date="2008-01" db="EMBL/GenBank/DDBJ databases">
        <title>Complete sequence of Pseudomonas putida GB-1.</title>
        <authorList>
            <consortium name="US DOE Joint Genome Institute"/>
            <person name="Copeland A."/>
            <person name="Lucas S."/>
            <person name="Lapidus A."/>
            <person name="Barry K."/>
            <person name="Glavina del Rio T."/>
            <person name="Dalin E."/>
            <person name="Tice H."/>
            <person name="Pitluck S."/>
            <person name="Bruce D."/>
            <person name="Goodwin L."/>
            <person name="Chertkov O."/>
            <person name="Brettin T."/>
            <person name="Detter J.C."/>
            <person name="Han C."/>
            <person name="Kuske C.R."/>
            <person name="Schmutz J."/>
            <person name="Larimer F."/>
            <person name="Land M."/>
            <person name="Hauser L."/>
            <person name="Kyrpides N."/>
            <person name="Kim E."/>
            <person name="McCarthy J.K."/>
            <person name="Richardson P."/>
        </authorList>
    </citation>
    <scope>NUCLEOTIDE SEQUENCE [LARGE SCALE GENOMIC DNA]</scope>
    <source>
        <strain>GB-1</strain>
    </source>
</reference>
<organism>
    <name type="scientific">Pseudomonas putida (strain GB-1)</name>
    <dbReference type="NCBI Taxonomy" id="76869"/>
    <lineage>
        <taxon>Bacteria</taxon>
        <taxon>Pseudomonadati</taxon>
        <taxon>Pseudomonadota</taxon>
        <taxon>Gammaproteobacteria</taxon>
        <taxon>Pseudomonadales</taxon>
        <taxon>Pseudomonadaceae</taxon>
        <taxon>Pseudomonas</taxon>
    </lineage>
</organism>
<comment type="similarity">
    <text evidence="1">Belongs to the bacterial ribosomal protein bL28 family.</text>
</comment>
<protein>
    <recommendedName>
        <fullName evidence="1">Large ribosomal subunit protein bL28</fullName>
    </recommendedName>
    <alternativeName>
        <fullName evidence="3">50S ribosomal protein L28</fullName>
    </alternativeName>
</protein>
<sequence>MSRVCQVTGKGPVTGNNISHANNKTRRRFLPNLQHHRFWVESEKRFVRLRVSAKGMRIIDKRGIDAVLVDIRKAGAKV</sequence>
<evidence type="ECO:0000255" key="1">
    <source>
        <dbReference type="HAMAP-Rule" id="MF_00373"/>
    </source>
</evidence>
<evidence type="ECO:0000256" key="2">
    <source>
        <dbReference type="SAM" id="MobiDB-lite"/>
    </source>
</evidence>
<evidence type="ECO:0000305" key="3"/>
<feature type="chain" id="PRO_1000079860" description="Large ribosomal subunit protein bL28">
    <location>
        <begin position="1"/>
        <end position="78"/>
    </location>
</feature>
<feature type="region of interest" description="Disordered" evidence="2">
    <location>
        <begin position="1"/>
        <end position="20"/>
    </location>
</feature>
<gene>
    <name evidence="1" type="primary">rpmB</name>
    <name type="ordered locus">PputGB1_5333</name>
</gene>
<accession>B0KQ85</accession>
<dbReference type="EMBL" id="CP000926">
    <property type="protein sequence ID" value="ABZ01215.1"/>
    <property type="molecule type" value="Genomic_DNA"/>
</dbReference>
<dbReference type="RefSeq" id="WP_003253504.1">
    <property type="nucleotide sequence ID" value="NC_010322.1"/>
</dbReference>
<dbReference type="SMR" id="B0KQ85"/>
<dbReference type="GeneID" id="93444363"/>
<dbReference type="KEGG" id="ppg:PputGB1_5333"/>
<dbReference type="eggNOG" id="COG0227">
    <property type="taxonomic scope" value="Bacteria"/>
</dbReference>
<dbReference type="HOGENOM" id="CLU_064548_3_1_6"/>
<dbReference type="Proteomes" id="UP000002157">
    <property type="component" value="Chromosome"/>
</dbReference>
<dbReference type="GO" id="GO:0022625">
    <property type="term" value="C:cytosolic large ribosomal subunit"/>
    <property type="evidence" value="ECO:0007669"/>
    <property type="project" value="TreeGrafter"/>
</dbReference>
<dbReference type="GO" id="GO:0003735">
    <property type="term" value="F:structural constituent of ribosome"/>
    <property type="evidence" value="ECO:0007669"/>
    <property type="project" value="InterPro"/>
</dbReference>
<dbReference type="GO" id="GO:0006412">
    <property type="term" value="P:translation"/>
    <property type="evidence" value="ECO:0007669"/>
    <property type="project" value="UniProtKB-UniRule"/>
</dbReference>
<dbReference type="FunFam" id="2.30.170.40:FF:000001">
    <property type="entry name" value="50S ribosomal protein L28"/>
    <property type="match status" value="1"/>
</dbReference>
<dbReference type="Gene3D" id="2.30.170.40">
    <property type="entry name" value="Ribosomal protein L28/L24"/>
    <property type="match status" value="1"/>
</dbReference>
<dbReference type="HAMAP" id="MF_00373">
    <property type="entry name" value="Ribosomal_bL28"/>
    <property type="match status" value="1"/>
</dbReference>
<dbReference type="InterPro" id="IPR026569">
    <property type="entry name" value="Ribosomal_bL28"/>
</dbReference>
<dbReference type="InterPro" id="IPR034704">
    <property type="entry name" value="Ribosomal_bL28/bL31-like_sf"/>
</dbReference>
<dbReference type="InterPro" id="IPR001383">
    <property type="entry name" value="Ribosomal_bL28_bact-type"/>
</dbReference>
<dbReference type="InterPro" id="IPR037147">
    <property type="entry name" value="Ribosomal_bL28_sf"/>
</dbReference>
<dbReference type="NCBIfam" id="TIGR00009">
    <property type="entry name" value="L28"/>
    <property type="match status" value="1"/>
</dbReference>
<dbReference type="PANTHER" id="PTHR13528">
    <property type="entry name" value="39S RIBOSOMAL PROTEIN L28, MITOCHONDRIAL"/>
    <property type="match status" value="1"/>
</dbReference>
<dbReference type="PANTHER" id="PTHR13528:SF2">
    <property type="entry name" value="LARGE RIBOSOMAL SUBUNIT PROTEIN BL28M"/>
    <property type="match status" value="1"/>
</dbReference>
<dbReference type="Pfam" id="PF00830">
    <property type="entry name" value="Ribosomal_L28"/>
    <property type="match status" value="1"/>
</dbReference>
<dbReference type="SUPFAM" id="SSF143800">
    <property type="entry name" value="L28p-like"/>
    <property type="match status" value="1"/>
</dbReference>
<proteinExistence type="inferred from homology"/>
<keyword id="KW-0687">Ribonucleoprotein</keyword>
<keyword id="KW-0689">Ribosomal protein</keyword>